<protein>
    <recommendedName>
        <fullName evidence="4">Ceramide reductase</fullName>
        <ecNumber evidence="6">1.-.-.-</ecNumber>
    </recommendedName>
</protein>
<gene>
    <name evidence="4" type="primary">cerR</name>
    <name evidence="7" type="ordered locus">CCNA_01222</name>
</gene>
<comment type="function">
    <text evidence="2 3">Involved in de novo bacterial ceramide synthesis (PubMed:33063925, PubMed:34969973). Catalyzes the reduction of bacterial oxidized ceramides to bacterial dihydroceramides (PubMed:34969973).</text>
</comment>
<comment type="catalytic activity">
    <reaction evidence="3">
        <text>N-acyl-3-oxosphinganine + NADH + H(+) = an N-acylsphinganine + NAD(+)</text>
        <dbReference type="Rhea" id="RHEA:70527"/>
        <dbReference type="ChEBI" id="CHEBI:15378"/>
        <dbReference type="ChEBI" id="CHEBI:31488"/>
        <dbReference type="ChEBI" id="CHEBI:57540"/>
        <dbReference type="ChEBI" id="CHEBI:57945"/>
        <dbReference type="ChEBI" id="CHEBI:189535"/>
    </reaction>
    <physiologicalReaction direction="left-to-right" evidence="3">
        <dbReference type="Rhea" id="RHEA:70528"/>
    </physiologicalReaction>
</comment>
<comment type="pathway">
    <text evidence="5">Lipid metabolism; sphingolipid metabolism.</text>
</comment>
<comment type="subcellular location">
    <subcellularLocation>
        <location evidence="6">Periplasm</location>
    </subcellularLocation>
</comment>
<comment type="disruption phenotype">
    <text evidence="2 3">Deletion mutant cannot form dihydroceramide (PubMed:33063925). Deletion of the gene results in a ceramide molecule with a mass reduction of 2 Da, corresponding to a loss of two hydrogens (PubMed:34969973). Mutants are impaired in growth at elevated temperatures but are resistant towards the antibiotic polymyxin B (PubMed:33063925).</text>
</comment>
<comment type="miscellaneous">
    <text evidence="3">The bacterial ceramide synthesis pathway operates in a different order from that in eukaryotes. Furthermore, phylogenetic analyses support the hypothesis that the bacterial and eukaryotic ceramide pathways evolved independently.</text>
</comment>
<comment type="similarity">
    <text evidence="5">Belongs to the NAD(P)-dependent epimerase/dehydratase family.</text>
</comment>
<proteinExistence type="evidence at protein level"/>
<keyword id="KW-0443">Lipid metabolism</keyword>
<keyword id="KW-0560">Oxidoreductase</keyword>
<keyword id="KW-0574">Periplasm</keyword>
<keyword id="KW-1185">Reference proteome</keyword>
<keyword id="KW-0732">Signal</keyword>
<reference key="1">
    <citation type="journal article" date="2010" name="J. Bacteriol.">
        <title>The genetic basis of laboratory adaptation in Caulobacter crescentus.</title>
        <authorList>
            <person name="Marks M.E."/>
            <person name="Castro-Rojas C.M."/>
            <person name="Teiling C."/>
            <person name="Du L."/>
            <person name="Kapatral V."/>
            <person name="Walunas T.L."/>
            <person name="Crosson S."/>
        </authorList>
    </citation>
    <scope>NUCLEOTIDE SEQUENCE [LARGE SCALE GENOMIC DNA]</scope>
    <source>
        <strain>NA1000 / CB15N</strain>
    </source>
</reference>
<reference key="2">
    <citation type="journal article" date="2021" name="Environ. Microbiol.">
        <title>Five structural genes required for ceramide synthesis in Caulobacter and for bacterial survival.</title>
        <authorList>
            <person name="Olea-Ozuna R.J."/>
            <person name="Poggio S."/>
            <person name="Bergstroem E."/>
            <person name="Quiroz-Rocha E."/>
            <person name="Garcia-Soriano D.A."/>
            <person name="Sahonero-Canavesi D.X."/>
            <person name="Padilla-Gomez J."/>
            <person name="Martinez-Aguilar L."/>
            <person name="Lopez-Lara I.M."/>
            <person name="Thomas-Oates J."/>
            <person name="Geiger O."/>
        </authorList>
    </citation>
    <scope>FUNCTION</scope>
    <scope>DISRUPTION PHENOTYPE</scope>
    <source>
        <strain>NA1000 / CB15N</strain>
    </source>
</reference>
<reference key="3">
    <citation type="journal article" date="2022" name="Nat. Chem. Biol.">
        <title>Convergent evolution of bacterial ceramide synthesis.</title>
        <authorList>
            <person name="Stankeviciute G."/>
            <person name="Tang P."/>
            <person name="Ashley B."/>
            <person name="Chamberlain J.D."/>
            <person name="Hansen M.E.B."/>
            <person name="Coleman A."/>
            <person name="D'Emilia R."/>
            <person name="Fu L."/>
            <person name="Mohan E.C."/>
            <person name="Nguyen H."/>
            <person name="Guan Z."/>
            <person name="Campopiano D.J."/>
            <person name="Klein E.A."/>
        </authorList>
    </citation>
    <scope>FUNCTION</scope>
    <scope>CATALYTIC ACTIVITY</scope>
    <scope>SUBCELLULAR LOCATION</scope>
    <scope>DISRUPTION PHENOTYPE</scope>
    <source>
        <strain>NA1000 / CB15N</strain>
    </source>
</reference>
<sequence>MATDARGVVAITGATGFLGRHLVRALAQDGWRPRVLVRRDPVHPFWRDLEVEVVTGDLGTPRALDRLAKGAEVFIHVAGLIKARTLEGFNRVNQDGARAAAEAARAAGARFILVSSLAAREPSLSNYAASKRAGEDAVRAADPSALIVRPPAIYGPGDTETLGLFQLAARSPVLPVLSQTSRVAMIHVEDAAAKLVAFCRTPVLGLVELSDVRRDGYTWTEIMRGAAHVMGAKPRLIRLPDPGILTAGALVDAWSSLTNTPSVFGLGKARELLHTDWTPSSAPMAEGVPSKFGLIDGFTHTVDWYRAAGWLPKNIVA</sequence>
<evidence type="ECO:0000255" key="1"/>
<evidence type="ECO:0000269" key="2">
    <source>
    </source>
</evidence>
<evidence type="ECO:0000269" key="3">
    <source>
    </source>
</evidence>
<evidence type="ECO:0000303" key="4">
    <source>
    </source>
</evidence>
<evidence type="ECO:0000305" key="5"/>
<evidence type="ECO:0000305" key="6">
    <source>
    </source>
</evidence>
<evidence type="ECO:0000312" key="7">
    <source>
        <dbReference type="EMBL" id="ACL94687.1"/>
    </source>
</evidence>
<accession>A0A0H3C8X7</accession>
<name>CERR_CAUVN</name>
<dbReference type="EC" id="1.-.-.-" evidence="6"/>
<dbReference type="EMBL" id="CP001340">
    <property type="protein sequence ID" value="ACL94687.1"/>
    <property type="molecule type" value="Genomic_DNA"/>
</dbReference>
<dbReference type="RefSeq" id="WP_010919048.1">
    <property type="nucleotide sequence ID" value="NC_011916.1"/>
</dbReference>
<dbReference type="RefSeq" id="YP_002516595.1">
    <property type="nucleotide sequence ID" value="NC_011916.1"/>
</dbReference>
<dbReference type="SMR" id="A0A0H3C8X7"/>
<dbReference type="GeneID" id="7333615"/>
<dbReference type="KEGG" id="ccs:CCNA_01222"/>
<dbReference type="PATRIC" id="fig|565050.3.peg.1204"/>
<dbReference type="HOGENOM" id="CLU_007383_6_1_5"/>
<dbReference type="OrthoDB" id="9814124at2"/>
<dbReference type="PhylomeDB" id="A0A0H3C8X7"/>
<dbReference type="UniPathway" id="UPA00222"/>
<dbReference type="Proteomes" id="UP000001364">
    <property type="component" value="Chromosome"/>
</dbReference>
<dbReference type="GO" id="GO:0016020">
    <property type="term" value="C:membrane"/>
    <property type="evidence" value="ECO:0007669"/>
    <property type="project" value="GOC"/>
</dbReference>
<dbReference type="GO" id="GO:0042597">
    <property type="term" value="C:periplasmic space"/>
    <property type="evidence" value="ECO:0007669"/>
    <property type="project" value="UniProtKB-SubCell"/>
</dbReference>
<dbReference type="GO" id="GO:0016491">
    <property type="term" value="F:oxidoreductase activity"/>
    <property type="evidence" value="ECO:0007669"/>
    <property type="project" value="UniProtKB-KW"/>
</dbReference>
<dbReference type="GO" id="GO:0044877">
    <property type="term" value="F:protein-containing complex binding"/>
    <property type="evidence" value="ECO:0007669"/>
    <property type="project" value="TreeGrafter"/>
</dbReference>
<dbReference type="GO" id="GO:0006665">
    <property type="term" value="P:sphingolipid metabolic process"/>
    <property type="evidence" value="ECO:0007669"/>
    <property type="project" value="UniProtKB-UniPathway"/>
</dbReference>
<dbReference type="Gene3D" id="3.40.50.720">
    <property type="entry name" value="NAD(P)-binding Rossmann-like Domain"/>
    <property type="match status" value="1"/>
</dbReference>
<dbReference type="InterPro" id="IPR051207">
    <property type="entry name" value="ComplexI_NDUFA9_subunit"/>
</dbReference>
<dbReference type="InterPro" id="IPR001509">
    <property type="entry name" value="Epimerase_deHydtase"/>
</dbReference>
<dbReference type="InterPro" id="IPR036291">
    <property type="entry name" value="NAD(P)-bd_dom_sf"/>
</dbReference>
<dbReference type="PANTHER" id="PTHR12126:SF11">
    <property type="entry name" value="NADH DEHYDROGENASE [UBIQUINONE] 1 ALPHA SUBCOMPLEX SUBUNIT 9, MITOCHONDRIAL"/>
    <property type="match status" value="1"/>
</dbReference>
<dbReference type="PANTHER" id="PTHR12126">
    <property type="entry name" value="NADH-UBIQUINONE OXIDOREDUCTASE 39 KDA SUBUNIT-RELATED"/>
    <property type="match status" value="1"/>
</dbReference>
<dbReference type="Pfam" id="PF01370">
    <property type="entry name" value="Epimerase"/>
    <property type="match status" value="1"/>
</dbReference>
<dbReference type="SMART" id="SM00822">
    <property type="entry name" value="PKS_KR"/>
    <property type="match status" value="1"/>
</dbReference>
<dbReference type="SUPFAM" id="SSF51735">
    <property type="entry name" value="NAD(P)-binding Rossmann-fold domains"/>
    <property type="match status" value="1"/>
</dbReference>
<feature type="signal peptide" evidence="1">
    <location>
        <begin position="1"/>
        <end position="27"/>
    </location>
</feature>
<feature type="chain" id="PRO_0000455454" description="Ceramide reductase" evidence="1">
    <location>
        <begin position="28"/>
        <end position="317"/>
    </location>
</feature>
<organism>
    <name type="scientific">Caulobacter vibrioides (strain NA1000 / CB15N)</name>
    <name type="common">Caulobacter crescentus</name>
    <dbReference type="NCBI Taxonomy" id="565050"/>
    <lineage>
        <taxon>Bacteria</taxon>
        <taxon>Pseudomonadati</taxon>
        <taxon>Pseudomonadota</taxon>
        <taxon>Alphaproteobacteria</taxon>
        <taxon>Caulobacterales</taxon>
        <taxon>Caulobacteraceae</taxon>
        <taxon>Caulobacter</taxon>
    </lineage>
</organism>